<evidence type="ECO:0000250" key="1"/>
<evidence type="ECO:0000250" key="2">
    <source>
        <dbReference type="UniProtKB" id="P07256"/>
    </source>
</evidence>
<evidence type="ECO:0000255" key="3"/>
<evidence type="ECO:0000255" key="4">
    <source>
        <dbReference type="PROSITE-ProRule" id="PRU10096"/>
    </source>
</evidence>
<evidence type="ECO:0000305" key="5"/>
<keyword id="KW-0249">Electron transport</keyword>
<keyword id="KW-0378">Hydrolase</keyword>
<keyword id="KW-0472">Membrane</keyword>
<keyword id="KW-0479">Metal-binding</keyword>
<keyword id="KW-0482">Metalloprotease</keyword>
<keyword id="KW-0496">Mitochondrion</keyword>
<keyword id="KW-0999">Mitochondrion inner membrane</keyword>
<keyword id="KW-0645">Protease</keyword>
<keyword id="KW-0679">Respiratory chain</keyword>
<keyword id="KW-0809">Transit peptide</keyword>
<keyword id="KW-0813">Transport</keyword>
<keyword id="KW-0862">Zinc</keyword>
<proteinExistence type="evidence at transcript level"/>
<name>QCR1_EUGGR</name>
<sequence>MTTPSLSSILRHTRPIFKETLRAARPTLQNALPNGFRIASESKDGDTCTVGVWIDAGSRWETEKNNGVAHFLEHMNFKGTGKRSRQDIEFGMEKMGAHLNAYTSREHTCYYVKCFKKDVPEAVDILADILLNSKRTEQDLDAERQTIVQEKEDVEARIDEVLMDHLHSAAFEGSGLGLSILGPLENIQKSITKGMIDDFVKTHYTGPRMALVGSGAVDHGQLCDLASKYFGALPTGQPKPSGFTRFLGGDKRETNQLNPLTHVAVAFQTPGISHPDAIKIKVLEQLLGSYSRDKGEAAYSCFARAIVMDFYDPKVGQFFRPNKAGHNPIHSLNAFWAPYSDVGLLGFYAIAEPGKSYGHEWENILHYAMRELIRVSRNISEEEFERAKNQLKLQTMLQLDGTTNIADDIGRQVLSFGARVPLASFFEQLDAISREDLIRVGPRVLLRQGPRGGGDWRHGQRARVRRPAGGDLLRGPLSCPLCTPLPRQSVVCMA</sequence>
<dbReference type="EMBL" id="D16671">
    <property type="protein sequence ID" value="BAA04079.2"/>
    <property type="status" value="ALT_SEQ"/>
    <property type="molecule type" value="mRNA"/>
</dbReference>
<dbReference type="PIR" id="JX0300">
    <property type="entry name" value="JX0300"/>
</dbReference>
<dbReference type="SMR" id="P43264"/>
<dbReference type="DrugCentral" id="P43264"/>
<dbReference type="MEROPS" id="M16.003"/>
<dbReference type="GO" id="GO:0005743">
    <property type="term" value="C:mitochondrial inner membrane"/>
    <property type="evidence" value="ECO:0007669"/>
    <property type="project" value="UniProtKB-SubCell"/>
</dbReference>
<dbReference type="GO" id="GO:0046872">
    <property type="term" value="F:metal ion binding"/>
    <property type="evidence" value="ECO:0007669"/>
    <property type="project" value="UniProtKB-KW"/>
</dbReference>
<dbReference type="GO" id="GO:0004222">
    <property type="term" value="F:metalloendopeptidase activity"/>
    <property type="evidence" value="ECO:0007669"/>
    <property type="project" value="InterPro"/>
</dbReference>
<dbReference type="GO" id="GO:0006508">
    <property type="term" value="P:proteolysis"/>
    <property type="evidence" value="ECO:0007669"/>
    <property type="project" value="UniProtKB-KW"/>
</dbReference>
<dbReference type="FunFam" id="3.30.830.10:FF:000008">
    <property type="entry name" value="Mitochondrial-processing peptidase subunit beta"/>
    <property type="match status" value="1"/>
</dbReference>
<dbReference type="Gene3D" id="3.30.830.10">
    <property type="entry name" value="Metalloenzyme, LuxS/M16 peptidase-like"/>
    <property type="match status" value="2"/>
</dbReference>
<dbReference type="InterPro" id="IPR011249">
    <property type="entry name" value="Metalloenz_LuxS/M16"/>
</dbReference>
<dbReference type="InterPro" id="IPR050361">
    <property type="entry name" value="MPP/UQCRC_Complex"/>
</dbReference>
<dbReference type="InterPro" id="IPR011765">
    <property type="entry name" value="Pept_M16_N"/>
</dbReference>
<dbReference type="InterPro" id="IPR001431">
    <property type="entry name" value="Pept_M16_Zn_BS"/>
</dbReference>
<dbReference type="InterPro" id="IPR007863">
    <property type="entry name" value="Peptidase_M16_C"/>
</dbReference>
<dbReference type="PANTHER" id="PTHR11851:SF149">
    <property type="entry name" value="GH01077P"/>
    <property type="match status" value="1"/>
</dbReference>
<dbReference type="PANTHER" id="PTHR11851">
    <property type="entry name" value="METALLOPROTEASE"/>
    <property type="match status" value="1"/>
</dbReference>
<dbReference type="Pfam" id="PF00675">
    <property type="entry name" value="Peptidase_M16"/>
    <property type="match status" value="1"/>
</dbReference>
<dbReference type="Pfam" id="PF05193">
    <property type="entry name" value="Peptidase_M16_C"/>
    <property type="match status" value="1"/>
</dbReference>
<dbReference type="SUPFAM" id="SSF63411">
    <property type="entry name" value="LuxS/MPP-like metallohydrolase"/>
    <property type="match status" value="2"/>
</dbReference>
<dbReference type="PROSITE" id="PS00143">
    <property type="entry name" value="INSULINASE"/>
    <property type="match status" value="1"/>
</dbReference>
<reference key="1">
    <citation type="journal article" date="1994" name="J. Biochem.">
        <title>Molecular cloning and nucleotide sequences of cDNAs encoding subunits I, II, and IX of Euglena gracilis mitochondrial complex III.</title>
        <authorList>
            <person name="Cui J.-Y."/>
            <person name="Mukai K."/>
            <person name="Saeki K."/>
            <person name="Matsubara H."/>
        </authorList>
    </citation>
    <scope>NUCLEOTIDE SEQUENCE [MRNA]</scope>
    <source>
        <strain>SM-ZK</strain>
    </source>
</reference>
<comment type="function">
    <text evidence="2">Component of the ubiquinol-cytochrome c oxidoreductase, a multisubunit transmembrane complex that is part of the mitochondrial electron transport chain which drives oxidative phosphorylation. The respiratory chain contains 3 multisubunit complexes succinate dehydrogenase (complex II, CII), ubiquinol-cytochrome c oxidoreductase (cytochrome b-c1 complex, complex III, CIII) and cytochrome c oxidase (complex IV, CIV), that cooperate to transfer electrons derived from NADH and succinate to molecular oxygen, creating an electrochemical gradient over the inner membrane that drives transmembrane transport and the ATP synthase. The cytochrome b-c1 complex catalyzes electron transfer from ubiquinol to cytochrome c, linking this redox reaction to translocation of protons across the mitochondrial inner membrane, with protons being carried across the membrane as hydrogens on the quinol. In the process called Q cycle, 2 protons are consumed from the matrix, 4 protons are released into the intermembrane space and 2 electrons are passed to cytochrome c.</text>
</comment>
<comment type="cofactor">
    <cofactor evidence="1">
        <name>Zn(2+)</name>
        <dbReference type="ChEBI" id="CHEBI:29105"/>
    </cofactor>
    <text evidence="1">Binds 1 zinc ion per subunit.</text>
</comment>
<comment type="subunit">
    <text evidence="2">Component of the ubiquinol-cytochrome c oxidoreductase (cytochrome b-c1 complex, complex III, CIII), a multisubunit enzyme composed of 10 subunits. The complex is composed of 3 respiratory subunits cytochrome b, cytochrome c1 and Rieske protein, 2 core protein subunits, and additional low-molecular weight protein subunits. The complex exists as an obligatory dimer and forms supercomplexes (SCs) in the inner mitochondrial membrane with cytochrome c oxidase (complex IV, CIV).</text>
</comment>
<comment type="subcellular location">
    <subcellularLocation>
        <location evidence="2">Mitochondrion inner membrane</location>
        <topology evidence="2">Peripheral membrane protein</topology>
        <orientation evidence="2">Matrix side</orientation>
    </subcellularLocation>
</comment>
<comment type="PTM">
    <text>The N-terminus is blocked.</text>
</comment>
<comment type="similarity">
    <text evidence="5">Belongs to the peptidase M16 family. UQCRC1/QCR1 subfamily.</text>
</comment>
<comment type="sequence caution" evidence="5">
    <conflict type="miscellaneous discrepancy">
        <sequence resource="EMBL-CDS" id="BAA04079"/>
    </conflict>
    <text>Incorrect translation table.</text>
</comment>
<protein>
    <recommendedName>
        <fullName>Ubiquinol-cytochrome-c reductase complex core protein I, mitochondrial</fullName>
    </recommendedName>
</protein>
<accession>P43264</accession>
<feature type="transit peptide" description="Mitochondrion" evidence="3">
    <location>
        <begin position="1"/>
        <end status="unknown"/>
    </location>
</feature>
<feature type="chain" id="PRO_0000026789" description="Ubiquinol-cytochrome-c reductase complex core protein I, mitochondrial">
    <location>
        <begin status="unknown"/>
        <end position="494"/>
    </location>
</feature>
<feature type="active site" description="Proton acceptor" evidence="4">
    <location>
        <position position="73"/>
    </location>
</feature>
<feature type="binding site" evidence="4">
    <location>
        <position position="70"/>
    </location>
    <ligand>
        <name>Zn(2+)</name>
        <dbReference type="ChEBI" id="CHEBI:29105"/>
    </ligand>
</feature>
<feature type="binding site" evidence="4">
    <location>
        <position position="74"/>
    </location>
    <ligand>
        <name>Zn(2+)</name>
        <dbReference type="ChEBI" id="CHEBI:29105"/>
    </ligand>
</feature>
<feature type="binding site" evidence="4">
    <location>
        <position position="150"/>
    </location>
    <ligand>
        <name>Zn(2+)</name>
        <dbReference type="ChEBI" id="CHEBI:29105"/>
    </ligand>
</feature>
<organism>
    <name type="scientific">Euglena gracilis</name>
    <dbReference type="NCBI Taxonomy" id="3039"/>
    <lineage>
        <taxon>Eukaryota</taxon>
        <taxon>Discoba</taxon>
        <taxon>Euglenozoa</taxon>
        <taxon>Euglenida</taxon>
        <taxon>Spirocuta</taxon>
        <taxon>Euglenophyceae</taxon>
        <taxon>Euglenales</taxon>
        <taxon>Euglenaceae</taxon>
        <taxon>Euglena</taxon>
    </lineage>
</organism>